<gene>
    <name type="primary">RAI2</name>
</gene>
<dbReference type="EMBL" id="AF136587">
    <property type="protein sequence ID" value="AAD33688.1"/>
    <property type="molecule type" value="Genomic_DNA"/>
</dbReference>
<dbReference type="EMBL" id="AK298873">
    <property type="protein sequence ID" value="BAG60991.1"/>
    <property type="molecule type" value="mRNA"/>
</dbReference>
<dbReference type="EMBL" id="Z93242">
    <property type="status" value="NOT_ANNOTATED_CDS"/>
    <property type="molecule type" value="Genomic_DNA"/>
</dbReference>
<dbReference type="EMBL" id="BC027937">
    <property type="protein sequence ID" value="AAH27937.1"/>
    <property type="molecule type" value="mRNA"/>
</dbReference>
<dbReference type="CCDS" id="CCDS14183.1">
    <molecule id="Q9Y5P3-1"/>
</dbReference>
<dbReference type="CCDS" id="CCDS55374.1">
    <molecule id="Q9Y5P3-2"/>
</dbReference>
<dbReference type="RefSeq" id="NP_001166203.2">
    <molecule id="Q9Y5P3-2"/>
    <property type="nucleotide sequence ID" value="NM_001172732.2"/>
</dbReference>
<dbReference type="RefSeq" id="NP_001166210.2">
    <molecule id="Q9Y5P3-1"/>
    <property type="nucleotide sequence ID" value="NM_001172739.2"/>
</dbReference>
<dbReference type="RefSeq" id="NP_001166214.2">
    <molecule id="Q9Y5P3-1"/>
    <property type="nucleotide sequence ID" value="NM_001172743.2"/>
</dbReference>
<dbReference type="RefSeq" id="NP_068557.4">
    <molecule id="Q9Y5P3-1"/>
    <property type="nucleotide sequence ID" value="NM_021785.6"/>
</dbReference>
<dbReference type="RefSeq" id="XP_006724522.1">
    <molecule id="Q9Y5P3-1"/>
    <property type="nucleotide sequence ID" value="XM_006724459.3"/>
</dbReference>
<dbReference type="RefSeq" id="XP_006724523.1">
    <molecule id="Q9Y5P3-1"/>
    <property type="nucleotide sequence ID" value="XM_006724460.2"/>
</dbReference>
<dbReference type="RefSeq" id="XP_011543741.1">
    <molecule id="Q9Y5P3-1"/>
    <property type="nucleotide sequence ID" value="XM_011545439.3"/>
</dbReference>
<dbReference type="RefSeq" id="XP_011543742.1">
    <property type="nucleotide sequence ID" value="XM_011545440.2"/>
</dbReference>
<dbReference type="RefSeq" id="XP_011543743.1">
    <molecule id="Q9Y5P3-1"/>
    <property type="nucleotide sequence ID" value="XM_011545441.3"/>
</dbReference>
<dbReference type="RefSeq" id="XP_047297744.1">
    <molecule id="Q9Y5P3-1"/>
    <property type="nucleotide sequence ID" value="XM_047441788.1"/>
</dbReference>
<dbReference type="PDB" id="8ARI">
    <property type="method" value="EM"/>
    <property type="resolution" value="3.00 A"/>
    <property type="chains" value="a/b/c/d/e/f/g/h/i/j=303-362"/>
</dbReference>
<dbReference type="PDB" id="8ATI">
    <property type="method" value="X-ray"/>
    <property type="resolution" value="2.60 A"/>
    <property type="chains" value="a/b/c=303-465"/>
</dbReference>
<dbReference type="PDBsum" id="8ARI"/>
<dbReference type="PDBsum" id="8ATI"/>
<dbReference type="EMDB" id="EMD-15603"/>
<dbReference type="SASBDB" id="Q9Y5P3"/>
<dbReference type="SMR" id="Q9Y5P3"/>
<dbReference type="BioGRID" id="115965">
    <property type="interactions" value="22"/>
</dbReference>
<dbReference type="FunCoup" id="Q9Y5P3">
    <property type="interactions" value="89"/>
</dbReference>
<dbReference type="IntAct" id="Q9Y5P3">
    <property type="interactions" value="30"/>
</dbReference>
<dbReference type="MINT" id="Q9Y5P3"/>
<dbReference type="STRING" id="9606.ENSP00000444210"/>
<dbReference type="iPTMnet" id="Q9Y5P3"/>
<dbReference type="PhosphoSitePlus" id="Q9Y5P3"/>
<dbReference type="BioMuta" id="RAI2"/>
<dbReference type="DMDM" id="205371817"/>
<dbReference type="MassIVE" id="Q9Y5P3"/>
<dbReference type="PaxDb" id="9606-ENSP00000444210"/>
<dbReference type="PeptideAtlas" id="Q9Y5P3"/>
<dbReference type="ProteomicsDB" id="16981"/>
<dbReference type="ProteomicsDB" id="86462">
    <molecule id="Q9Y5P3-1"/>
</dbReference>
<dbReference type="Antibodypedia" id="35327">
    <property type="antibodies" value="40 antibodies from 18 providers"/>
</dbReference>
<dbReference type="DNASU" id="10742"/>
<dbReference type="Ensembl" id="ENST00000331511.5">
    <molecule id="Q9Y5P3-1"/>
    <property type="protein sequence ID" value="ENSP00000333456.1"/>
    <property type="gene ID" value="ENSG00000131831.18"/>
</dbReference>
<dbReference type="Ensembl" id="ENST00000360011.5">
    <molecule id="Q9Y5P3-1"/>
    <property type="protein sequence ID" value="ENSP00000353106.1"/>
    <property type="gene ID" value="ENSG00000131831.18"/>
</dbReference>
<dbReference type="Ensembl" id="ENST00000415486.7">
    <molecule id="Q9Y5P3-2"/>
    <property type="protein sequence ID" value="ENSP00000392578.2"/>
    <property type="gene ID" value="ENSG00000131831.18"/>
</dbReference>
<dbReference type="Ensembl" id="ENST00000451717.6">
    <molecule id="Q9Y5P3-1"/>
    <property type="protein sequence ID" value="ENSP00000401323.1"/>
    <property type="gene ID" value="ENSG00000131831.18"/>
</dbReference>
<dbReference type="Ensembl" id="ENST00000545871.1">
    <molecule id="Q9Y5P3-1"/>
    <property type="protein sequence ID" value="ENSP00000444210.1"/>
    <property type="gene ID" value="ENSG00000131831.18"/>
</dbReference>
<dbReference type="GeneID" id="10742"/>
<dbReference type="KEGG" id="hsa:10742"/>
<dbReference type="MANE-Select" id="ENST00000451717.6">
    <property type="protein sequence ID" value="ENSP00000401323.1"/>
    <property type="RefSeq nucleotide sequence ID" value="NM_021785.6"/>
    <property type="RefSeq protein sequence ID" value="NP_068557.4"/>
</dbReference>
<dbReference type="UCSC" id="uc004cyf.4">
    <molecule id="Q9Y5P3-1"/>
    <property type="organism name" value="human"/>
</dbReference>
<dbReference type="AGR" id="HGNC:9835"/>
<dbReference type="CTD" id="10742"/>
<dbReference type="DisGeNET" id="10742"/>
<dbReference type="GeneCards" id="RAI2"/>
<dbReference type="HGNC" id="HGNC:9835">
    <property type="gene designation" value="RAI2"/>
</dbReference>
<dbReference type="HPA" id="ENSG00000131831">
    <property type="expression patterns" value="Low tissue specificity"/>
</dbReference>
<dbReference type="MIM" id="300217">
    <property type="type" value="gene"/>
</dbReference>
<dbReference type="neXtProt" id="NX_Q9Y5P3"/>
<dbReference type="OpenTargets" id="ENSG00000131831"/>
<dbReference type="PharmGKB" id="PA34193"/>
<dbReference type="VEuPathDB" id="HostDB:ENSG00000131831"/>
<dbReference type="eggNOG" id="ENOG502RCMZ">
    <property type="taxonomic scope" value="Eukaryota"/>
</dbReference>
<dbReference type="GeneTree" id="ENSGT00940000154164"/>
<dbReference type="HOGENOM" id="CLU_044853_0_0_1"/>
<dbReference type="InParanoid" id="Q9Y5P3"/>
<dbReference type="OMA" id="QHKWLVD"/>
<dbReference type="OrthoDB" id="9936033at2759"/>
<dbReference type="PAN-GO" id="Q9Y5P3">
    <property type="GO annotations" value="2 GO annotations based on evolutionary models"/>
</dbReference>
<dbReference type="PhylomeDB" id="Q9Y5P3"/>
<dbReference type="TreeFam" id="TF331261"/>
<dbReference type="PathwayCommons" id="Q9Y5P3"/>
<dbReference type="SignaLink" id="Q9Y5P3"/>
<dbReference type="BioGRID-ORCS" id="10742">
    <property type="hits" value="12 hits in 778 CRISPR screens"/>
</dbReference>
<dbReference type="ChiTaRS" id="RAI2">
    <property type="organism name" value="human"/>
</dbReference>
<dbReference type="GeneWiki" id="RAI2"/>
<dbReference type="GenomeRNAi" id="10742"/>
<dbReference type="Pharos" id="Q9Y5P3">
    <property type="development level" value="Tdark"/>
</dbReference>
<dbReference type="PRO" id="PR:Q9Y5P3"/>
<dbReference type="Proteomes" id="UP000005640">
    <property type="component" value="Chromosome X"/>
</dbReference>
<dbReference type="RNAct" id="Q9Y5P3">
    <property type="molecule type" value="protein"/>
</dbReference>
<dbReference type="Bgee" id="ENSG00000131831">
    <property type="expression patterns" value="Expressed in left uterine tube and 184 other cell types or tissues"/>
</dbReference>
<dbReference type="ExpressionAtlas" id="Q9Y5P3">
    <property type="expression patterns" value="baseline and differential"/>
</dbReference>
<dbReference type="GO" id="GO:0005634">
    <property type="term" value="C:nucleus"/>
    <property type="evidence" value="ECO:0000318"/>
    <property type="project" value="GO_Central"/>
</dbReference>
<dbReference type="GO" id="GO:0048513">
    <property type="term" value="P:animal organ development"/>
    <property type="evidence" value="ECO:0000318"/>
    <property type="project" value="GO_Central"/>
</dbReference>
<dbReference type="GO" id="GO:0009792">
    <property type="term" value="P:embryo development ending in birth or egg hatching"/>
    <property type="evidence" value="ECO:0000303"/>
    <property type="project" value="UniProtKB"/>
</dbReference>
<dbReference type="InterPro" id="IPR026092">
    <property type="entry name" value="RAI2/SOBP"/>
</dbReference>
<dbReference type="PANTHER" id="PTHR23186">
    <property type="entry name" value="RETINOIC ACID-INDUCED PROTEIN 2"/>
    <property type="match status" value="1"/>
</dbReference>
<dbReference type="PANTHER" id="PTHR23186:SF3">
    <property type="entry name" value="RETINOIC ACID-INDUCED PROTEIN 2"/>
    <property type="match status" value="1"/>
</dbReference>
<dbReference type="Pfam" id="PF15279">
    <property type="entry name" value="SOBP"/>
    <property type="match status" value="1"/>
</dbReference>
<organism>
    <name type="scientific">Homo sapiens</name>
    <name type="common">Human</name>
    <dbReference type="NCBI Taxonomy" id="9606"/>
    <lineage>
        <taxon>Eukaryota</taxon>
        <taxon>Metazoa</taxon>
        <taxon>Chordata</taxon>
        <taxon>Craniata</taxon>
        <taxon>Vertebrata</taxon>
        <taxon>Euteleostomi</taxon>
        <taxon>Mammalia</taxon>
        <taxon>Eutheria</taxon>
        <taxon>Euarchontoglires</taxon>
        <taxon>Primates</taxon>
        <taxon>Haplorrhini</taxon>
        <taxon>Catarrhini</taxon>
        <taxon>Hominidae</taxon>
        <taxon>Homo</taxon>
    </lineage>
</organism>
<protein>
    <recommendedName>
        <fullName>Retinoic acid-induced protein 2</fullName>
    </recommendedName>
</protein>
<comment type="interaction">
    <interactant intactId="EBI-746228">
        <id>Q9Y5P3</id>
    </interactant>
    <interactant intactId="EBI-908846">
        <id>Q13363</id>
        <label>CTBP1</label>
    </interactant>
    <organismsDiffer>false</organismsDiffer>
    <experiments>3</experiments>
</comment>
<comment type="interaction">
    <interactant intactId="EBI-746228">
        <id>Q9Y5P3</id>
    </interactant>
    <interactant intactId="EBI-741533">
        <id>P56545</id>
        <label>CTBP2</label>
    </interactant>
    <organismsDiffer>false</organismsDiffer>
    <experiments>4</experiments>
</comment>
<comment type="interaction">
    <interactant intactId="EBI-746228">
        <id>Q9Y5P3</id>
    </interactant>
    <interactant intactId="EBI-10171902">
        <id>P56545-3</id>
        <label>CTBP2</label>
    </interactant>
    <organismsDiffer>false</organismsDiffer>
    <experiments>3</experiments>
</comment>
<comment type="interaction">
    <interactant intactId="EBI-746228">
        <id>Q9Y5P3</id>
    </interactant>
    <interactant intactId="EBI-750300">
        <id>Q01658</id>
        <label>DR1</label>
    </interactant>
    <organismsDiffer>false</organismsDiffer>
    <experiments>3</experiments>
</comment>
<comment type="interaction">
    <interactant intactId="EBI-746228">
        <id>Q9Y5P3</id>
    </interactant>
    <interactant intactId="EBI-701903">
        <id>Q14192</id>
        <label>FHL2</label>
    </interactant>
    <organismsDiffer>false</organismsDiffer>
    <experiments>7</experiments>
</comment>
<comment type="interaction">
    <interactant intactId="EBI-746228">
        <id>Q9Y5P3</id>
    </interactant>
    <interactant intactId="EBI-1054873">
        <id>Q9Y5Q9</id>
        <label>GTF3C3</label>
    </interactant>
    <organismsDiffer>false</organismsDiffer>
    <experiments>3</experiments>
</comment>
<comment type="interaction">
    <interactant intactId="EBI-746228">
        <id>Q9Y5P3</id>
    </interactant>
    <interactant intactId="EBI-352682">
        <id>P04792</id>
        <label>HSPB1</label>
    </interactant>
    <organismsDiffer>false</organismsDiffer>
    <experiments>3</experiments>
</comment>
<comment type="interaction">
    <interactant intactId="EBI-746228">
        <id>Q9Y5P3</id>
    </interactant>
    <interactant intactId="EBI-10975473">
        <id>O60333-2</id>
        <label>KIF1B</label>
    </interactant>
    <organismsDiffer>false</organismsDiffer>
    <experiments>3</experiments>
</comment>
<comment type="interaction">
    <interactant intactId="EBI-746228">
        <id>Q9Y5P3</id>
    </interactant>
    <interactant intactId="EBI-475646">
        <id>P07196</id>
        <label>NEFL</label>
    </interactant>
    <organismsDiffer>false</organismsDiffer>
    <experiments>3</experiments>
</comment>
<comment type="interaction">
    <interactant intactId="EBI-746228">
        <id>Q9Y5P3</id>
    </interactant>
    <interactant intactId="EBI-749195">
        <id>P60891</id>
        <label>PRPS1</label>
    </interactant>
    <organismsDiffer>false</organismsDiffer>
    <experiments>3</experiments>
</comment>
<comment type="interaction">
    <interactant intactId="EBI-746228">
        <id>Q9Y5P3</id>
    </interactant>
    <interactant intactId="EBI-396669">
        <id>Q9Y3C5</id>
        <label>RNF11</label>
    </interactant>
    <organismsDiffer>false</organismsDiffer>
    <experiments>3</experiments>
</comment>
<comment type="interaction">
    <interactant intactId="EBI-746228">
        <id>Q9Y5P3</id>
    </interactant>
    <interactant intactId="EBI-744081">
        <id>Q96EQ0</id>
        <label>SGTB</label>
    </interactant>
    <organismsDiffer>false</organismsDiffer>
    <experiments>5</experiments>
</comment>
<comment type="interaction">
    <interactant intactId="EBI-746228">
        <id>Q9Y5P3</id>
    </interactant>
    <interactant intactId="EBI-741480">
        <id>Q9UMX0</id>
        <label>UBQLN1</label>
    </interactant>
    <organismsDiffer>false</organismsDiffer>
    <experiments>3</experiments>
</comment>
<comment type="interaction">
    <interactant intactId="EBI-746228">
        <id>Q9Y5P3</id>
    </interactant>
    <interactant intactId="EBI-711226">
        <id>Q9NRR5</id>
        <label>UBQLN4</label>
    </interactant>
    <organismsDiffer>false</organismsDiffer>
    <experiments>3</experiments>
</comment>
<comment type="interaction">
    <interactant intactId="EBI-746228">
        <id>Q9Y5P3</id>
    </interactant>
    <interactant intactId="EBI-720609">
        <id>O76024</id>
        <label>WFS1</label>
    </interactant>
    <organismsDiffer>false</organismsDiffer>
    <experiments>3</experiments>
</comment>
<comment type="alternative products">
    <event type="alternative splicing"/>
    <isoform>
        <id>Q9Y5P3-1</id>
        <name>1</name>
        <sequence type="displayed"/>
    </isoform>
    <isoform>
        <id>Q9Y5P3-2</id>
        <name>2</name>
        <sequence type="described" ref="VSP_047524"/>
    </isoform>
</comment>
<accession>Q9Y5P3</accession>
<accession>B1B1K2</accession>
<accession>B4DQM9</accession>
<accession>E7EMN4</accession>
<accession>Q8N6X7</accession>
<reference key="1">
    <citation type="journal article" date="1999" name="Genomics">
        <title>Identification and characterization of the human homologue (RAI2) of a mouse retinoic acid-induced gene in Xp22.</title>
        <authorList>
            <person name="Walpole S.M."/>
            <person name="Hiriyana K.T."/>
            <person name="Nicolaou A."/>
            <person name="Bingham E.L."/>
            <person name="Durham J."/>
            <person name="Vaudin M."/>
            <person name="Ross M.T."/>
            <person name="Yates J.R.W."/>
            <person name="Sieving P.A."/>
            <person name="Trump D."/>
        </authorList>
    </citation>
    <scope>NUCLEOTIDE SEQUENCE [GENOMIC DNA]</scope>
    <scope>VARIANT VAL-252</scope>
</reference>
<reference key="2">
    <citation type="journal article" date="2004" name="Nat. Genet.">
        <title>Complete sequencing and characterization of 21,243 full-length human cDNAs.</title>
        <authorList>
            <person name="Ota T."/>
            <person name="Suzuki Y."/>
            <person name="Nishikawa T."/>
            <person name="Otsuki T."/>
            <person name="Sugiyama T."/>
            <person name="Irie R."/>
            <person name="Wakamatsu A."/>
            <person name="Hayashi K."/>
            <person name="Sato H."/>
            <person name="Nagai K."/>
            <person name="Kimura K."/>
            <person name="Makita H."/>
            <person name="Sekine M."/>
            <person name="Obayashi M."/>
            <person name="Nishi T."/>
            <person name="Shibahara T."/>
            <person name="Tanaka T."/>
            <person name="Ishii S."/>
            <person name="Yamamoto J."/>
            <person name="Saito K."/>
            <person name="Kawai Y."/>
            <person name="Isono Y."/>
            <person name="Nakamura Y."/>
            <person name="Nagahari K."/>
            <person name="Murakami K."/>
            <person name="Yasuda T."/>
            <person name="Iwayanagi T."/>
            <person name="Wagatsuma M."/>
            <person name="Shiratori A."/>
            <person name="Sudo H."/>
            <person name="Hosoiri T."/>
            <person name="Kaku Y."/>
            <person name="Kodaira H."/>
            <person name="Kondo H."/>
            <person name="Sugawara M."/>
            <person name="Takahashi M."/>
            <person name="Kanda K."/>
            <person name="Yokoi T."/>
            <person name="Furuya T."/>
            <person name="Kikkawa E."/>
            <person name="Omura Y."/>
            <person name="Abe K."/>
            <person name="Kamihara K."/>
            <person name="Katsuta N."/>
            <person name="Sato K."/>
            <person name="Tanikawa M."/>
            <person name="Yamazaki M."/>
            <person name="Ninomiya K."/>
            <person name="Ishibashi T."/>
            <person name="Yamashita H."/>
            <person name="Murakawa K."/>
            <person name="Fujimori K."/>
            <person name="Tanai H."/>
            <person name="Kimata M."/>
            <person name="Watanabe M."/>
            <person name="Hiraoka S."/>
            <person name="Chiba Y."/>
            <person name="Ishida S."/>
            <person name="Ono Y."/>
            <person name="Takiguchi S."/>
            <person name="Watanabe S."/>
            <person name="Yosida M."/>
            <person name="Hotuta T."/>
            <person name="Kusano J."/>
            <person name="Kanehori K."/>
            <person name="Takahashi-Fujii A."/>
            <person name="Hara H."/>
            <person name="Tanase T.-O."/>
            <person name="Nomura Y."/>
            <person name="Togiya S."/>
            <person name="Komai F."/>
            <person name="Hara R."/>
            <person name="Takeuchi K."/>
            <person name="Arita M."/>
            <person name="Imose N."/>
            <person name="Musashino K."/>
            <person name="Yuuki H."/>
            <person name="Oshima A."/>
            <person name="Sasaki N."/>
            <person name="Aotsuka S."/>
            <person name="Yoshikawa Y."/>
            <person name="Matsunawa H."/>
            <person name="Ichihara T."/>
            <person name="Shiohata N."/>
            <person name="Sano S."/>
            <person name="Moriya S."/>
            <person name="Momiyama H."/>
            <person name="Satoh N."/>
            <person name="Takami S."/>
            <person name="Terashima Y."/>
            <person name="Suzuki O."/>
            <person name="Nakagawa S."/>
            <person name="Senoh A."/>
            <person name="Mizoguchi H."/>
            <person name="Goto Y."/>
            <person name="Shimizu F."/>
            <person name="Wakebe H."/>
            <person name="Hishigaki H."/>
            <person name="Watanabe T."/>
            <person name="Sugiyama A."/>
            <person name="Takemoto M."/>
            <person name="Kawakami B."/>
            <person name="Yamazaki M."/>
            <person name="Watanabe K."/>
            <person name="Kumagai A."/>
            <person name="Itakura S."/>
            <person name="Fukuzumi Y."/>
            <person name="Fujimori Y."/>
            <person name="Komiyama M."/>
            <person name="Tashiro H."/>
            <person name="Tanigami A."/>
            <person name="Fujiwara T."/>
            <person name="Ono T."/>
            <person name="Yamada K."/>
            <person name="Fujii Y."/>
            <person name="Ozaki K."/>
            <person name="Hirao M."/>
            <person name="Ohmori Y."/>
            <person name="Kawabata A."/>
            <person name="Hikiji T."/>
            <person name="Kobatake N."/>
            <person name="Inagaki H."/>
            <person name="Ikema Y."/>
            <person name="Okamoto S."/>
            <person name="Okitani R."/>
            <person name="Kawakami T."/>
            <person name="Noguchi S."/>
            <person name="Itoh T."/>
            <person name="Shigeta K."/>
            <person name="Senba T."/>
            <person name="Matsumura K."/>
            <person name="Nakajima Y."/>
            <person name="Mizuno T."/>
            <person name="Morinaga M."/>
            <person name="Sasaki M."/>
            <person name="Togashi T."/>
            <person name="Oyama M."/>
            <person name="Hata H."/>
            <person name="Watanabe M."/>
            <person name="Komatsu T."/>
            <person name="Mizushima-Sugano J."/>
            <person name="Satoh T."/>
            <person name="Shirai Y."/>
            <person name="Takahashi Y."/>
            <person name="Nakagawa K."/>
            <person name="Okumura K."/>
            <person name="Nagase T."/>
            <person name="Nomura N."/>
            <person name="Kikuchi H."/>
            <person name="Masuho Y."/>
            <person name="Yamashita R."/>
            <person name="Nakai K."/>
            <person name="Yada T."/>
            <person name="Nakamura Y."/>
            <person name="Ohara O."/>
            <person name="Isogai T."/>
            <person name="Sugano S."/>
        </authorList>
    </citation>
    <scope>NUCLEOTIDE SEQUENCE [LARGE SCALE MRNA] (ISOFORM 2)</scope>
    <scope>VARIANT VAL-252</scope>
</reference>
<reference key="3">
    <citation type="journal article" date="2005" name="Nature">
        <title>The DNA sequence of the human X chromosome.</title>
        <authorList>
            <person name="Ross M.T."/>
            <person name="Grafham D.V."/>
            <person name="Coffey A.J."/>
            <person name="Scherer S."/>
            <person name="McLay K."/>
            <person name="Muzny D."/>
            <person name="Platzer M."/>
            <person name="Howell G.R."/>
            <person name="Burrows C."/>
            <person name="Bird C.P."/>
            <person name="Frankish A."/>
            <person name="Lovell F.L."/>
            <person name="Howe K.L."/>
            <person name="Ashurst J.L."/>
            <person name="Fulton R.S."/>
            <person name="Sudbrak R."/>
            <person name="Wen G."/>
            <person name="Jones M.C."/>
            <person name="Hurles M.E."/>
            <person name="Andrews T.D."/>
            <person name="Scott C.E."/>
            <person name="Searle S."/>
            <person name="Ramser J."/>
            <person name="Whittaker A."/>
            <person name="Deadman R."/>
            <person name="Carter N.P."/>
            <person name="Hunt S.E."/>
            <person name="Chen R."/>
            <person name="Cree A."/>
            <person name="Gunaratne P."/>
            <person name="Havlak P."/>
            <person name="Hodgson A."/>
            <person name="Metzker M.L."/>
            <person name="Richards S."/>
            <person name="Scott G."/>
            <person name="Steffen D."/>
            <person name="Sodergren E."/>
            <person name="Wheeler D.A."/>
            <person name="Worley K.C."/>
            <person name="Ainscough R."/>
            <person name="Ambrose K.D."/>
            <person name="Ansari-Lari M.A."/>
            <person name="Aradhya S."/>
            <person name="Ashwell R.I."/>
            <person name="Babbage A.K."/>
            <person name="Bagguley C.L."/>
            <person name="Ballabio A."/>
            <person name="Banerjee R."/>
            <person name="Barker G.E."/>
            <person name="Barlow K.F."/>
            <person name="Barrett I.P."/>
            <person name="Bates K.N."/>
            <person name="Beare D.M."/>
            <person name="Beasley H."/>
            <person name="Beasley O."/>
            <person name="Beck A."/>
            <person name="Bethel G."/>
            <person name="Blechschmidt K."/>
            <person name="Brady N."/>
            <person name="Bray-Allen S."/>
            <person name="Bridgeman A.M."/>
            <person name="Brown A.J."/>
            <person name="Brown M.J."/>
            <person name="Bonnin D."/>
            <person name="Bruford E.A."/>
            <person name="Buhay C."/>
            <person name="Burch P."/>
            <person name="Burford D."/>
            <person name="Burgess J."/>
            <person name="Burrill W."/>
            <person name="Burton J."/>
            <person name="Bye J.M."/>
            <person name="Carder C."/>
            <person name="Carrel L."/>
            <person name="Chako J."/>
            <person name="Chapman J.C."/>
            <person name="Chavez D."/>
            <person name="Chen E."/>
            <person name="Chen G."/>
            <person name="Chen Y."/>
            <person name="Chen Z."/>
            <person name="Chinault C."/>
            <person name="Ciccodicola A."/>
            <person name="Clark S.Y."/>
            <person name="Clarke G."/>
            <person name="Clee C.M."/>
            <person name="Clegg S."/>
            <person name="Clerc-Blankenburg K."/>
            <person name="Clifford K."/>
            <person name="Cobley V."/>
            <person name="Cole C.G."/>
            <person name="Conquer J.S."/>
            <person name="Corby N."/>
            <person name="Connor R.E."/>
            <person name="David R."/>
            <person name="Davies J."/>
            <person name="Davis C."/>
            <person name="Davis J."/>
            <person name="Delgado O."/>
            <person name="Deshazo D."/>
            <person name="Dhami P."/>
            <person name="Ding Y."/>
            <person name="Dinh H."/>
            <person name="Dodsworth S."/>
            <person name="Draper H."/>
            <person name="Dugan-Rocha S."/>
            <person name="Dunham A."/>
            <person name="Dunn M."/>
            <person name="Durbin K.J."/>
            <person name="Dutta I."/>
            <person name="Eades T."/>
            <person name="Ellwood M."/>
            <person name="Emery-Cohen A."/>
            <person name="Errington H."/>
            <person name="Evans K.L."/>
            <person name="Faulkner L."/>
            <person name="Francis F."/>
            <person name="Frankland J."/>
            <person name="Fraser A.E."/>
            <person name="Galgoczy P."/>
            <person name="Gilbert J."/>
            <person name="Gill R."/>
            <person name="Gloeckner G."/>
            <person name="Gregory S.G."/>
            <person name="Gribble S."/>
            <person name="Griffiths C."/>
            <person name="Grocock R."/>
            <person name="Gu Y."/>
            <person name="Gwilliam R."/>
            <person name="Hamilton C."/>
            <person name="Hart E.A."/>
            <person name="Hawes A."/>
            <person name="Heath P.D."/>
            <person name="Heitmann K."/>
            <person name="Hennig S."/>
            <person name="Hernandez J."/>
            <person name="Hinzmann B."/>
            <person name="Ho S."/>
            <person name="Hoffs M."/>
            <person name="Howden P.J."/>
            <person name="Huckle E.J."/>
            <person name="Hume J."/>
            <person name="Hunt P.J."/>
            <person name="Hunt A.R."/>
            <person name="Isherwood J."/>
            <person name="Jacob L."/>
            <person name="Johnson D."/>
            <person name="Jones S."/>
            <person name="de Jong P.J."/>
            <person name="Joseph S.S."/>
            <person name="Keenan S."/>
            <person name="Kelly S."/>
            <person name="Kershaw J.K."/>
            <person name="Khan Z."/>
            <person name="Kioschis P."/>
            <person name="Klages S."/>
            <person name="Knights A.J."/>
            <person name="Kosiura A."/>
            <person name="Kovar-Smith C."/>
            <person name="Laird G.K."/>
            <person name="Langford C."/>
            <person name="Lawlor S."/>
            <person name="Leversha M."/>
            <person name="Lewis L."/>
            <person name="Liu W."/>
            <person name="Lloyd C."/>
            <person name="Lloyd D.M."/>
            <person name="Loulseged H."/>
            <person name="Loveland J.E."/>
            <person name="Lovell J.D."/>
            <person name="Lozado R."/>
            <person name="Lu J."/>
            <person name="Lyne R."/>
            <person name="Ma J."/>
            <person name="Maheshwari M."/>
            <person name="Matthews L.H."/>
            <person name="McDowall J."/>
            <person name="McLaren S."/>
            <person name="McMurray A."/>
            <person name="Meidl P."/>
            <person name="Meitinger T."/>
            <person name="Milne S."/>
            <person name="Miner G."/>
            <person name="Mistry S.L."/>
            <person name="Morgan M."/>
            <person name="Morris S."/>
            <person name="Mueller I."/>
            <person name="Mullikin J.C."/>
            <person name="Nguyen N."/>
            <person name="Nordsiek G."/>
            <person name="Nyakatura G."/>
            <person name="O'dell C.N."/>
            <person name="Okwuonu G."/>
            <person name="Palmer S."/>
            <person name="Pandian R."/>
            <person name="Parker D."/>
            <person name="Parrish J."/>
            <person name="Pasternak S."/>
            <person name="Patel D."/>
            <person name="Pearce A.V."/>
            <person name="Pearson D.M."/>
            <person name="Pelan S.E."/>
            <person name="Perez L."/>
            <person name="Porter K.M."/>
            <person name="Ramsey Y."/>
            <person name="Reichwald K."/>
            <person name="Rhodes S."/>
            <person name="Ridler K.A."/>
            <person name="Schlessinger D."/>
            <person name="Schueler M.G."/>
            <person name="Sehra H.K."/>
            <person name="Shaw-Smith C."/>
            <person name="Shen H."/>
            <person name="Sheridan E.M."/>
            <person name="Shownkeen R."/>
            <person name="Skuce C.D."/>
            <person name="Smith M.L."/>
            <person name="Sotheran E.C."/>
            <person name="Steingruber H.E."/>
            <person name="Steward C.A."/>
            <person name="Storey R."/>
            <person name="Swann R.M."/>
            <person name="Swarbreck D."/>
            <person name="Tabor P.E."/>
            <person name="Taudien S."/>
            <person name="Taylor T."/>
            <person name="Teague B."/>
            <person name="Thomas K."/>
            <person name="Thorpe A."/>
            <person name="Timms K."/>
            <person name="Tracey A."/>
            <person name="Trevanion S."/>
            <person name="Tromans A.C."/>
            <person name="d'Urso M."/>
            <person name="Verduzco D."/>
            <person name="Villasana D."/>
            <person name="Waldron L."/>
            <person name="Wall M."/>
            <person name="Wang Q."/>
            <person name="Warren J."/>
            <person name="Warry G.L."/>
            <person name="Wei X."/>
            <person name="West A."/>
            <person name="Whitehead S.L."/>
            <person name="Whiteley M.N."/>
            <person name="Wilkinson J.E."/>
            <person name="Willey D.L."/>
            <person name="Williams G."/>
            <person name="Williams L."/>
            <person name="Williamson A."/>
            <person name="Williamson H."/>
            <person name="Wilming L."/>
            <person name="Woodmansey R.L."/>
            <person name="Wray P.W."/>
            <person name="Yen J."/>
            <person name="Zhang J."/>
            <person name="Zhou J."/>
            <person name="Zoghbi H."/>
            <person name="Zorilla S."/>
            <person name="Buck D."/>
            <person name="Reinhardt R."/>
            <person name="Poustka A."/>
            <person name="Rosenthal A."/>
            <person name="Lehrach H."/>
            <person name="Meindl A."/>
            <person name="Minx P.J."/>
            <person name="Hillier L.W."/>
            <person name="Willard H.F."/>
            <person name="Wilson R.K."/>
            <person name="Waterston R.H."/>
            <person name="Rice C.M."/>
            <person name="Vaudin M."/>
            <person name="Coulson A."/>
            <person name="Nelson D.L."/>
            <person name="Weinstock G."/>
            <person name="Sulston J.E."/>
            <person name="Durbin R.M."/>
            <person name="Hubbard T."/>
            <person name="Gibbs R.A."/>
            <person name="Beck S."/>
            <person name="Rogers J."/>
            <person name="Bentley D.R."/>
        </authorList>
    </citation>
    <scope>NUCLEOTIDE SEQUENCE [LARGE SCALE GENOMIC DNA]</scope>
</reference>
<reference key="4">
    <citation type="journal article" date="2004" name="Genome Res.">
        <title>The status, quality, and expansion of the NIH full-length cDNA project: the Mammalian Gene Collection (MGC).</title>
        <authorList>
            <consortium name="The MGC Project Team"/>
        </authorList>
    </citation>
    <scope>NUCLEOTIDE SEQUENCE [LARGE SCALE MRNA] (ISOFORM 1)</scope>
    <scope>VARIANTS VAL-252 AND PRO-342</scope>
    <source>
        <tissue>Lung</tissue>
    </source>
</reference>
<proteinExistence type="evidence at protein level"/>
<keyword id="KW-0002">3D-structure</keyword>
<keyword id="KW-0025">Alternative splicing</keyword>
<keyword id="KW-1267">Proteomics identification</keyword>
<keyword id="KW-1185">Reference proteome</keyword>
<sequence length="530" mass="57180">MDDLQSQNLSMDMTDSPPALANNRLENGMAQLITTEAWNINSTDLVKKALVTVPAPSILNPPAESQSGMALKVAATVLQPLCLGESPVVMPIHMQVEGSSAPELNPNGNATYVMTTQGPVQLPVVLEQHVFQHLNSPLVLPQEAPCSSSTIHNNLFQGAEDPEAQPQLLDLRIPSQPQEPTLPFEAVLQNLFPSQGTLGPPPCQPPPGYAPVPPQPFSSPLSPLVPPATLLVPYPVIVPLPVPVPIPIPIPMPQSSESKFSSSFPKPPSSFGLHPFKGTQTPLEKDELKPFDILQPKEYFQLSRHTVIKMGSENEALDLSMKSVPWLKAGEVSPPIFQEDAALDLSVAAHRKSEPPPETLYDSGASVDSSGHTVMEKLPSGMEISFAPATSHEAPAMMDSHISSSDAATEMLSQPNHPSGEVKAENNIEMVGESQAAKVIVSVEDAVPTIFCGKIKGLSGVSTKNFSFKREDSVLQGYDINSQGEESMGNAEPLRKPIKNRSIKLKKVNSQEIHMLPIKKQRLATFFPRK</sequence>
<name>RAI2_HUMAN</name>
<feature type="chain" id="PRO_0000097161" description="Retinoic acid-induced protein 2">
    <location>
        <begin position="1"/>
        <end position="530"/>
    </location>
</feature>
<feature type="region of interest" description="Disordered" evidence="1">
    <location>
        <begin position="1"/>
        <end position="22"/>
    </location>
</feature>
<feature type="compositionally biased region" description="Polar residues" evidence="1">
    <location>
        <begin position="1"/>
        <end position="13"/>
    </location>
</feature>
<feature type="splice variant" id="VSP_047524" description="In isoform 2." evidence="5">
    <location>
        <begin position="46"/>
        <end position="95"/>
    </location>
</feature>
<feature type="sequence variant" id="VAR_046100" description="In dbSNP:rs6527818." evidence="2 3 4">
    <original>M</original>
    <variation>V</variation>
    <location>
        <position position="252"/>
    </location>
</feature>
<feature type="sequence variant" id="VAR_046101" description="In dbSNP:rs17855524." evidence="4">
    <original>A</original>
    <variation>P</variation>
    <location>
        <position position="342"/>
    </location>
</feature>
<evidence type="ECO:0000256" key="1">
    <source>
        <dbReference type="SAM" id="MobiDB-lite"/>
    </source>
</evidence>
<evidence type="ECO:0000269" key="2">
    <source>
    </source>
</evidence>
<evidence type="ECO:0000269" key="3">
    <source>
    </source>
</evidence>
<evidence type="ECO:0000269" key="4">
    <source>
    </source>
</evidence>
<evidence type="ECO:0000303" key="5">
    <source>
    </source>
</evidence>